<organism>
    <name type="scientific">Homo sapiens</name>
    <name type="common">Human</name>
    <dbReference type="NCBI Taxonomy" id="9606"/>
    <lineage>
        <taxon>Eukaryota</taxon>
        <taxon>Metazoa</taxon>
        <taxon>Chordata</taxon>
        <taxon>Craniata</taxon>
        <taxon>Vertebrata</taxon>
        <taxon>Euteleostomi</taxon>
        <taxon>Mammalia</taxon>
        <taxon>Eutheria</taxon>
        <taxon>Euarchontoglires</taxon>
        <taxon>Primates</taxon>
        <taxon>Haplorrhini</taxon>
        <taxon>Catarrhini</taxon>
        <taxon>Hominidae</taxon>
        <taxon>Homo</taxon>
    </lineage>
</organism>
<comment type="similarity">
    <text evidence="2">Belongs to the cyclin family. Cyclin Y subfamily.</text>
</comment>
<name>CYL1B_HUMAN</name>
<dbReference type="EMBL" id="FP325313">
    <property type="status" value="NOT_ANNOTATED_CDS"/>
    <property type="molecule type" value="Genomic_DNA"/>
</dbReference>
<dbReference type="RefSeq" id="XP_011506939.1">
    <property type="nucleotide sequence ID" value="XM_011508637.2"/>
</dbReference>
<dbReference type="RefSeq" id="XP_011533653.1">
    <property type="nucleotide sequence ID" value="XM_011535351.2"/>
</dbReference>
<dbReference type="RefSeq" id="XP_011544347.1">
    <property type="nucleotide sequence ID" value="XM_011546045.4"/>
</dbReference>
<dbReference type="SMR" id="A0A8V8TMC4"/>
<dbReference type="FunCoup" id="A0A8V8TMC4">
    <property type="interactions" value="190"/>
</dbReference>
<dbReference type="Ensembl" id="ENST00000638228.3">
    <property type="protein sequence ID" value="ENSP00000513283.1"/>
    <property type="gene ID" value="ENSG00000284209.3"/>
</dbReference>
<dbReference type="GeneID" id="102724485"/>
<dbReference type="KEGG" id="hsa:102724485"/>
<dbReference type="AGR" id="HGNC:56313"/>
<dbReference type="CTD" id="102724485"/>
<dbReference type="GeneCards" id="CCNYL1B"/>
<dbReference type="HGNC" id="HGNC:56313">
    <property type="gene designation" value="CCNYL1B"/>
</dbReference>
<dbReference type="GeneTree" id="ENSGT00940000154453"/>
<dbReference type="PRO" id="PR:A0A8V8TMC4"/>
<dbReference type="Proteomes" id="UP000005640">
    <property type="component" value="Chromosome 16"/>
</dbReference>
<dbReference type="GO" id="GO:0005886">
    <property type="term" value="C:plasma membrane"/>
    <property type="evidence" value="ECO:0000318"/>
    <property type="project" value="GO_Central"/>
</dbReference>
<dbReference type="GO" id="GO:0060828">
    <property type="term" value="P:regulation of canonical Wnt signaling pathway"/>
    <property type="evidence" value="ECO:0000318"/>
    <property type="project" value="GO_Central"/>
</dbReference>
<dbReference type="CDD" id="cd20540">
    <property type="entry name" value="CYCLIN_CCNY_like"/>
    <property type="match status" value="1"/>
</dbReference>
<dbReference type="Gene3D" id="1.10.472.10">
    <property type="entry name" value="Cyclin-like"/>
    <property type="match status" value="1"/>
</dbReference>
<dbReference type="InterPro" id="IPR036915">
    <property type="entry name" value="Cyclin-like_sf"/>
</dbReference>
<dbReference type="InterPro" id="IPR006671">
    <property type="entry name" value="Cyclin_N"/>
</dbReference>
<dbReference type="PANTHER" id="PTHR14248">
    <property type="entry name" value="CYCLIN Y, ISOFORM A"/>
    <property type="match status" value="1"/>
</dbReference>
<dbReference type="Pfam" id="PF00134">
    <property type="entry name" value="Cyclin_N"/>
    <property type="match status" value="1"/>
</dbReference>
<dbReference type="SUPFAM" id="SSF47954">
    <property type="entry name" value="Cyclin-like"/>
    <property type="match status" value="1"/>
</dbReference>
<sequence length="285" mass="32724">MPKNFASDCPGESTLFLRKYQMSVQEKRSSSHLYYIPPWHLDRKYGSCSTILLDNSTASQPDLRHTLESVALAIYYNIKHRYANRSLAIFEEPVHPLPQEKLPGKSFKHDPKRNCIFRHFCTLFQVIKLTAPCAIVALVYIKRLLTSANIDLCPTNWKKIVLGTMLLASKVWRNHGLWSVDDSQNSKDTAVENMSKMEKCFLELLEFNIHVSASVYAKYYFDLCALANDHDLYFLFSFLHKDKAQKLEAMSRLCEYKDLHQDAAALKRVISMNFIGIGCSNAILS</sequence>
<accession>A0A8V8TMC4</accession>
<protein>
    <recommendedName>
        <fullName evidence="2">Cyclin-Y-like protein 1B</fullName>
    </recommendedName>
</protein>
<feature type="chain" id="PRO_0000458444" description="Cyclin-Y-like protein 1B">
    <location>
        <begin position="1"/>
        <end position="285"/>
    </location>
</feature>
<feature type="domain" description="Cyclin N-terminal" evidence="1">
    <location>
        <begin position="111"/>
        <end position="209"/>
    </location>
</feature>
<gene>
    <name evidence="3" type="primary">CCNYL1B</name>
</gene>
<proteinExistence type="inferred from homology"/>
<reference key="1">
    <citation type="journal article" date="2004" name="Nature">
        <title>The sequence and analysis of duplication-rich human chromosome 16.</title>
        <authorList>
            <person name="Martin J."/>
            <person name="Han C."/>
            <person name="Gordon L.A."/>
            <person name="Terry A."/>
            <person name="Prabhakar S."/>
            <person name="She X."/>
            <person name="Xie G."/>
            <person name="Hellsten U."/>
            <person name="Chan Y.M."/>
            <person name="Altherr M."/>
            <person name="Couronne O."/>
            <person name="Aerts A."/>
            <person name="Bajorek E."/>
            <person name="Black S."/>
            <person name="Blumer H."/>
            <person name="Branscomb E."/>
            <person name="Brown N.C."/>
            <person name="Bruno W.J."/>
            <person name="Buckingham J.M."/>
            <person name="Callen D.F."/>
            <person name="Campbell C.S."/>
            <person name="Campbell M.L."/>
            <person name="Campbell E.W."/>
            <person name="Caoile C."/>
            <person name="Challacombe J.F."/>
            <person name="Chasteen L.A."/>
            <person name="Chertkov O."/>
            <person name="Chi H.C."/>
            <person name="Christensen M."/>
            <person name="Clark L.M."/>
            <person name="Cohn J.D."/>
            <person name="Denys M."/>
            <person name="Detter J.C."/>
            <person name="Dickson M."/>
            <person name="Dimitrijevic-Bussod M."/>
            <person name="Escobar J."/>
            <person name="Fawcett J.J."/>
            <person name="Flowers D."/>
            <person name="Fotopulos D."/>
            <person name="Glavina T."/>
            <person name="Gomez M."/>
            <person name="Gonzales E."/>
            <person name="Goodstein D."/>
            <person name="Goodwin L.A."/>
            <person name="Grady D.L."/>
            <person name="Grigoriev I."/>
            <person name="Groza M."/>
            <person name="Hammon N."/>
            <person name="Hawkins T."/>
            <person name="Haydu L."/>
            <person name="Hildebrand C.E."/>
            <person name="Huang W."/>
            <person name="Israni S."/>
            <person name="Jett J."/>
            <person name="Jewett P.B."/>
            <person name="Kadner K."/>
            <person name="Kimball H."/>
            <person name="Kobayashi A."/>
            <person name="Krawczyk M.-C."/>
            <person name="Leyba T."/>
            <person name="Longmire J.L."/>
            <person name="Lopez F."/>
            <person name="Lou Y."/>
            <person name="Lowry S."/>
            <person name="Ludeman T."/>
            <person name="Manohar C.F."/>
            <person name="Mark G.A."/>
            <person name="McMurray K.L."/>
            <person name="Meincke L.J."/>
            <person name="Morgan J."/>
            <person name="Moyzis R.K."/>
            <person name="Mundt M.O."/>
            <person name="Munk A.C."/>
            <person name="Nandkeshwar R.D."/>
            <person name="Pitluck S."/>
            <person name="Pollard M."/>
            <person name="Predki P."/>
            <person name="Parson-Quintana B."/>
            <person name="Ramirez L."/>
            <person name="Rash S."/>
            <person name="Retterer J."/>
            <person name="Ricke D.O."/>
            <person name="Robinson D.L."/>
            <person name="Rodriguez A."/>
            <person name="Salamov A."/>
            <person name="Saunders E.H."/>
            <person name="Scott D."/>
            <person name="Shough T."/>
            <person name="Stallings R.L."/>
            <person name="Stalvey M."/>
            <person name="Sutherland R.D."/>
            <person name="Tapia R."/>
            <person name="Tesmer J.G."/>
            <person name="Thayer N."/>
            <person name="Thompson L.S."/>
            <person name="Tice H."/>
            <person name="Torney D.C."/>
            <person name="Tran-Gyamfi M."/>
            <person name="Tsai M."/>
            <person name="Ulanovsky L.E."/>
            <person name="Ustaszewska A."/>
            <person name="Vo N."/>
            <person name="White P.S."/>
            <person name="Williams A.L."/>
            <person name="Wills P.L."/>
            <person name="Wu J.-R."/>
            <person name="Wu K."/>
            <person name="Yang J."/>
            <person name="DeJong P."/>
            <person name="Bruce D."/>
            <person name="Doggett N.A."/>
            <person name="Deaven L."/>
            <person name="Schmutz J."/>
            <person name="Grimwood J."/>
            <person name="Richardson P."/>
            <person name="Rokhsar D.S."/>
            <person name="Eichler E.E."/>
            <person name="Gilna P."/>
            <person name="Lucas S.M."/>
            <person name="Myers R.M."/>
            <person name="Rubin E.M."/>
            <person name="Pennacchio L.A."/>
        </authorList>
    </citation>
    <scope>NUCLEOTIDE SEQUENCE [LARGE SCALE GENOMIC DNA]</scope>
</reference>
<keyword id="KW-1185">Reference proteome</keyword>
<evidence type="ECO:0000255" key="1"/>
<evidence type="ECO:0000305" key="2"/>
<evidence type="ECO:0000312" key="3">
    <source>
        <dbReference type="HGNC" id="HGNC:56313"/>
    </source>
</evidence>